<name>SELO_CLOB8</name>
<dbReference type="EC" id="2.7.7.-" evidence="1"/>
<dbReference type="EC" id="2.7.7.108" evidence="1"/>
<dbReference type="EMBL" id="CP000721">
    <property type="protein sequence ID" value="ABR34664.1"/>
    <property type="molecule type" value="Genomic_DNA"/>
</dbReference>
<dbReference type="RefSeq" id="WP_012058719.1">
    <property type="nucleotide sequence ID" value="NC_009617.1"/>
</dbReference>
<dbReference type="SMR" id="A6LWD4"/>
<dbReference type="KEGG" id="cbe:Cbei_2508"/>
<dbReference type="eggNOG" id="COG0397">
    <property type="taxonomic scope" value="Bacteria"/>
</dbReference>
<dbReference type="HOGENOM" id="CLU_010245_4_1_9"/>
<dbReference type="Proteomes" id="UP000000565">
    <property type="component" value="Chromosome"/>
</dbReference>
<dbReference type="GO" id="GO:0070733">
    <property type="term" value="F:AMPylase activity"/>
    <property type="evidence" value="ECO:0007669"/>
    <property type="project" value="TreeGrafter"/>
</dbReference>
<dbReference type="GO" id="GO:0005524">
    <property type="term" value="F:ATP binding"/>
    <property type="evidence" value="ECO:0007669"/>
    <property type="project" value="UniProtKB-UniRule"/>
</dbReference>
<dbReference type="GO" id="GO:0000287">
    <property type="term" value="F:magnesium ion binding"/>
    <property type="evidence" value="ECO:0007669"/>
    <property type="project" value="UniProtKB-UniRule"/>
</dbReference>
<dbReference type="HAMAP" id="MF_00692">
    <property type="entry name" value="YdiU_SelO"/>
    <property type="match status" value="1"/>
</dbReference>
<dbReference type="InterPro" id="IPR003846">
    <property type="entry name" value="SelO"/>
</dbReference>
<dbReference type="NCBIfam" id="NF000658">
    <property type="entry name" value="PRK00029.1"/>
    <property type="match status" value="1"/>
</dbReference>
<dbReference type="PANTHER" id="PTHR32057">
    <property type="entry name" value="PROTEIN ADENYLYLTRANSFERASE SELO, MITOCHONDRIAL"/>
    <property type="match status" value="1"/>
</dbReference>
<dbReference type="PANTHER" id="PTHR32057:SF14">
    <property type="entry name" value="PROTEIN ADENYLYLTRANSFERASE SELO, MITOCHONDRIAL"/>
    <property type="match status" value="1"/>
</dbReference>
<dbReference type="Pfam" id="PF02696">
    <property type="entry name" value="SelO"/>
    <property type="match status" value="1"/>
</dbReference>
<accession>A6LWD4</accession>
<comment type="function">
    <text evidence="1">Nucleotidyltransferase involved in the post-translational modification of proteins. It can catalyze the addition of adenosine monophosphate (AMP) or uridine monophosphate (UMP) to a protein, resulting in modifications known as AMPylation and UMPylation.</text>
</comment>
<comment type="catalytic activity">
    <reaction evidence="1">
        <text>L-seryl-[protein] + ATP = 3-O-(5'-adenylyl)-L-seryl-[protein] + diphosphate</text>
        <dbReference type="Rhea" id="RHEA:58120"/>
        <dbReference type="Rhea" id="RHEA-COMP:9863"/>
        <dbReference type="Rhea" id="RHEA-COMP:15073"/>
        <dbReference type="ChEBI" id="CHEBI:29999"/>
        <dbReference type="ChEBI" id="CHEBI:30616"/>
        <dbReference type="ChEBI" id="CHEBI:33019"/>
        <dbReference type="ChEBI" id="CHEBI:142516"/>
        <dbReference type="EC" id="2.7.7.108"/>
    </reaction>
</comment>
<comment type="catalytic activity">
    <reaction evidence="1">
        <text>L-threonyl-[protein] + ATP = 3-O-(5'-adenylyl)-L-threonyl-[protein] + diphosphate</text>
        <dbReference type="Rhea" id="RHEA:54292"/>
        <dbReference type="Rhea" id="RHEA-COMP:11060"/>
        <dbReference type="Rhea" id="RHEA-COMP:13847"/>
        <dbReference type="ChEBI" id="CHEBI:30013"/>
        <dbReference type="ChEBI" id="CHEBI:30616"/>
        <dbReference type="ChEBI" id="CHEBI:33019"/>
        <dbReference type="ChEBI" id="CHEBI:138113"/>
        <dbReference type="EC" id="2.7.7.108"/>
    </reaction>
</comment>
<comment type="catalytic activity">
    <reaction evidence="1">
        <text>L-tyrosyl-[protein] + ATP = O-(5'-adenylyl)-L-tyrosyl-[protein] + diphosphate</text>
        <dbReference type="Rhea" id="RHEA:54288"/>
        <dbReference type="Rhea" id="RHEA-COMP:10136"/>
        <dbReference type="Rhea" id="RHEA-COMP:13846"/>
        <dbReference type="ChEBI" id="CHEBI:30616"/>
        <dbReference type="ChEBI" id="CHEBI:33019"/>
        <dbReference type="ChEBI" id="CHEBI:46858"/>
        <dbReference type="ChEBI" id="CHEBI:83624"/>
        <dbReference type="EC" id="2.7.7.108"/>
    </reaction>
</comment>
<comment type="catalytic activity">
    <reaction evidence="1">
        <text>L-histidyl-[protein] + UTP = N(tele)-(5'-uridylyl)-L-histidyl-[protein] + diphosphate</text>
        <dbReference type="Rhea" id="RHEA:83891"/>
        <dbReference type="Rhea" id="RHEA-COMP:9745"/>
        <dbReference type="Rhea" id="RHEA-COMP:20239"/>
        <dbReference type="ChEBI" id="CHEBI:29979"/>
        <dbReference type="ChEBI" id="CHEBI:33019"/>
        <dbReference type="ChEBI" id="CHEBI:46398"/>
        <dbReference type="ChEBI" id="CHEBI:233474"/>
    </reaction>
</comment>
<comment type="catalytic activity">
    <reaction evidence="1">
        <text>L-seryl-[protein] + UTP = O-(5'-uridylyl)-L-seryl-[protein] + diphosphate</text>
        <dbReference type="Rhea" id="RHEA:64604"/>
        <dbReference type="Rhea" id="RHEA-COMP:9863"/>
        <dbReference type="Rhea" id="RHEA-COMP:16635"/>
        <dbReference type="ChEBI" id="CHEBI:29999"/>
        <dbReference type="ChEBI" id="CHEBI:33019"/>
        <dbReference type="ChEBI" id="CHEBI:46398"/>
        <dbReference type="ChEBI" id="CHEBI:156051"/>
    </reaction>
</comment>
<comment type="catalytic activity">
    <reaction evidence="1">
        <text>L-tyrosyl-[protein] + UTP = O-(5'-uridylyl)-L-tyrosyl-[protein] + diphosphate</text>
        <dbReference type="Rhea" id="RHEA:83887"/>
        <dbReference type="Rhea" id="RHEA-COMP:10136"/>
        <dbReference type="Rhea" id="RHEA-COMP:20238"/>
        <dbReference type="ChEBI" id="CHEBI:33019"/>
        <dbReference type="ChEBI" id="CHEBI:46398"/>
        <dbReference type="ChEBI" id="CHEBI:46858"/>
        <dbReference type="ChEBI" id="CHEBI:90602"/>
    </reaction>
</comment>
<comment type="cofactor">
    <cofactor evidence="1">
        <name>Mg(2+)</name>
        <dbReference type="ChEBI" id="CHEBI:18420"/>
    </cofactor>
    <cofactor evidence="1">
        <name>Mn(2+)</name>
        <dbReference type="ChEBI" id="CHEBI:29035"/>
    </cofactor>
</comment>
<comment type="similarity">
    <text evidence="1">Belongs to the SELO family.</text>
</comment>
<proteinExistence type="inferred from homology"/>
<keyword id="KW-0067">ATP-binding</keyword>
<keyword id="KW-0460">Magnesium</keyword>
<keyword id="KW-0464">Manganese</keyword>
<keyword id="KW-0479">Metal-binding</keyword>
<keyword id="KW-0547">Nucleotide-binding</keyword>
<keyword id="KW-0548">Nucleotidyltransferase</keyword>
<keyword id="KW-0808">Transferase</keyword>
<feature type="chain" id="PRO_1000132098" description="Protein nucleotidyltransferase YdiU">
    <location>
        <begin position="1"/>
        <end position="490"/>
    </location>
</feature>
<feature type="active site" description="Proton acceptor" evidence="1">
    <location>
        <position position="256"/>
    </location>
</feature>
<feature type="binding site" evidence="1">
    <location>
        <position position="94"/>
    </location>
    <ligand>
        <name>ATP</name>
        <dbReference type="ChEBI" id="CHEBI:30616"/>
    </ligand>
</feature>
<feature type="binding site" evidence="1">
    <location>
        <position position="96"/>
    </location>
    <ligand>
        <name>ATP</name>
        <dbReference type="ChEBI" id="CHEBI:30616"/>
    </ligand>
</feature>
<feature type="binding site" evidence="1">
    <location>
        <position position="97"/>
    </location>
    <ligand>
        <name>ATP</name>
        <dbReference type="ChEBI" id="CHEBI:30616"/>
    </ligand>
</feature>
<feature type="binding site" evidence="1">
    <location>
        <position position="117"/>
    </location>
    <ligand>
        <name>ATP</name>
        <dbReference type="ChEBI" id="CHEBI:30616"/>
    </ligand>
</feature>
<feature type="binding site" evidence="1">
    <location>
        <position position="129"/>
    </location>
    <ligand>
        <name>ATP</name>
        <dbReference type="ChEBI" id="CHEBI:30616"/>
    </ligand>
</feature>
<feature type="binding site" evidence="1">
    <location>
        <position position="130"/>
    </location>
    <ligand>
        <name>ATP</name>
        <dbReference type="ChEBI" id="CHEBI:30616"/>
    </ligand>
</feature>
<feature type="binding site" evidence="1">
    <location>
        <position position="180"/>
    </location>
    <ligand>
        <name>ATP</name>
        <dbReference type="ChEBI" id="CHEBI:30616"/>
    </ligand>
</feature>
<feature type="binding site" evidence="1">
    <location>
        <position position="187"/>
    </location>
    <ligand>
        <name>ATP</name>
        <dbReference type="ChEBI" id="CHEBI:30616"/>
    </ligand>
</feature>
<feature type="binding site" evidence="1">
    <location>
        <position position="257"/>
    </location>
    <ligand>
        <name>Mg(2+)</name>
        <dbReference type="ChEBI" id="CHEBI:18420"/>
    </ligand>
</feature>
<feature type="binding site" evidence="1">
    <location>
        <position position="266"/>
    </location>
    <ligand>
        <name>ATP</name>
        <dbReference type="ChEBI" id="CHEBI:30616"/>
    </ligand>
</feature>
<feature type="binding site" evidence="1">
    <location>
        <position position="266"/>
    </location>
    <ligand>
        <name>Mg(2+)</name>
        <dbReference type="ChEBI" id="CHEBI:18420"/>
    </ligand>
</feature>
<protein>
    <recommendedName>
        <fullName evidence="1">Protein nucleotidyltransferase YdiU</fullName>
        <ecNumber evidence="1">2.7.7.-</ecNumber>
    </recommendedName>
    <alternativeName>
        <fullName evidence="1">Protein adenylyltransferase YdiU</fullName>
        <ecNumber evidence="1">2.7.7.108</ecNumber>
    </alternativeName>
    <alternativeName>
        <fullName evidence="1">Protein uridylyltransferase YdiU</fullName>
        <ecNumber evidence="1">2.7.7.-</ecNumber>
    </alternativeName>
</protein>
<sequence>MQDIKIKSETGWKLDNTYADLPKTLFSKQNPTPVKAPKLVVLNQPLAESLGLKAEFLHDSDNVAIFAGNKIEEGSLPIAQAYAGHQFGYFNMLGDGRAILLGEQITPSGEKIDIQLKGSGRTPYSRGGDGRAALGPMLREYIISEAMQGLEIPTTRSLAVVTTGEPVIRENVLSGAILTRVASSHIRVATFQYAAKWGTIEELKALADYTIKRHFSDIDNLENPYIFLLQEVIKRQASLISKWQLVGFIHGVMNTDNMAISGETIDYGPCAFMDTYDLETVFSSIDREGRYSYGNQPPIAEWNLARFAETLLPLLHNNHEKSVEIAQNELSKFADLYHDNWLRGMISKLGIFNKESQDEALIENLLSIMYKYKADYTNTFSALTLDKYSDMELFKSKEFDKWHELWNARLNRQKESKESSNMLMKNSNPYVIPRNYRVEEALAAAEEGDYTVMNKLLHVLCNPYAYSDNQSEYEKLPQKSCGSYRTYCGT</sequence>
<reference key="1">
    <citation type="submission" date="2007-06" db="EMBL/GenBank/DDBJ databases">
        <title>Complete sequence of Clostridium beijerinckii NCIMB 8052.</title>
        <authorList>
            <consortium name="US DOE Joint Genome Institute"/>
            <person name="Copeland A."/>
            <person name="Lucas S."/>
            <person name="Lapidus A."/>
            <person name="Barry K."/>
            <person name="Detter J.C."/>
            <person name="Glavina del Rio T."/>
            <person name="Hammon N."/>
            <person name="Israni S."/>
            <person name="Dalin E."/>
            <person name="Tice H."/>
            <person name="Pitluck S."/>
            <person name="Sims D."/>
            <person name="Brettin T."/>
            <person name="Bruce D."/>
            <person name="Tapia R."/>
            <person name="Brainard J."/>
            <person name="Schmutz J."/>
            <person name="Larimer F."/>
            <person name="Land M."/>
            <person name="Hauser L."/>
            <person name="Kyrpides N."/>
            <person name="Mikhailova N."/>
            <person name="Bennet G."/>
            <person name="Cann I."/>
            <person name="Chen J.-S."/>
            <person name="Contreras A.L."/>
            <person name="Jones D."/>
            <person name="Kashket E."/>
            <person name="Mitchell W."/>
            <person name="Stoddard S."/>
            <person name="Schwarz W."/>
            <person name="Qureshi N."/>
            <person name="Young M."/>
            <person name="Shi Z."/>
            <person name="Ezeji T."/>
            <person name="White B."/>
            <person name="Blaschek H."/>
            <person name="Richardson P."/>
        </authorList>
    </citation>
    <scope>NUCLEOTIDE SEQUENCE [LARGE SCALE GENOMIC DNA]</scope>
    <source>
        <strain>ATCC 51743 / NCIMB 8052</strain>
    </source>
</reference>
<evidence type="ECO:0000255" key="1">
    <source>
        <dbReference type="HAMAP-Rule" id="MF_00692"/>
    </source>
</evidence>
<organism>
    <name type="scientific">Clostridium beijerinckii (strain ATCC 51743 / NCIMB 8052)</name>
    <name type="common">Clostridium acetobutylicum</name>
    <dbReference type="NCBI Taxonomy" id="290402"/>
    <lineage>
        <taxon>Bacteria</taxon>
        <taxon>Bacillati</taxon>
        <taxon>Bacillota</taxon>
        <taxon>Clostridia</taxon>
        <taxon>Eubacteriales</taxon>
        <taxon>Clostridiaceae</taxon>
        <taxon>Clostridium</taxon>
    </lineage>
</organism>
<gene>
    <name evidence="1" type="primary">ydiU</name>
    <name evidence="1" type="synonym">selO</name>
    <name type="ordered locus">Cbei_2508</name>
</gene>